<gene>
    <name evidence="6" type="primary">PIGH</name>
</gene>
<protein>
    <recommendedName>
        <fullName evidence="5">Phosphatidylinositol N-acetylglucosaminyltransferase subunit H</fullName>
    </recommendedName>
    <alternativeName>
        <fullName>Phosphatidylinositol-glycan biosynthesis class H protein</fullName>
        <shortName>PIG-H</shortName>
    </alternativeName>
</protein>
<keyword id="KW-1268">Autism spectrum disorder</keyword>
<keyword id="KW-0963">Cytoplasm</keyword>
<keyword id="KW-0225">Disease variant</keyword>
<keyword id="KW-0887">Epilepsy</keyword>
<keyword id="KW-1267">Proteomics identification</keyword>
<keyword id="KW-1185">Reference proteome</keyword>
<proteinExistence type="evidence at protein level"/>
<feature type="chain" id="PRO_0000058435" description="Phosphatidylinositol N-acetylglucosaminyltransferase subunit H">
    <location>
        <begin position="1"/>
        <end position="188"/>
    </location>
</feature>
<feature type="sequence variant" id="VAR_080993" description="In GPIBD17; decreased expression of GPI-anchored proteins, including FCGR3B/CD16B and CD55, in patient's granulocytes; dbSNP:rs776038451." evidence="3">
    <original>S</original>
    <variation>P</variation>
    <location>
        <position position="103"/>
    </location>
</feature>
<organism>
    <name type="scientific">Homo sapiens</name>
    <name type="common">Human</name>
    <dbReference type="NCBI Taxonomy" id="9606"/>
    <lineage>
        <taxon>Eukaryota</taxon>
        <taxon>Metazoa</taxon>
        <taxon>Chordata</taxon>
        <taxon>Craniata</taxon>
        <taxon>Vertebrata</taxon>
        <taxon>Euteleostomi</taxon>
        <taxon>Mammalia</taxon>
        <taxon>Eutheria</taxon>
        <taxon>Euarchontoglires</taxon>
        <taxon>Primates</taxon>
        <taxon>Haplorrhini</taxon>
        <taxon>Catarrhini</taxon>
        <taxon>Hominidae</taxon>
        <taxon>Homo</taxon>
    </lineage>
</organism>
<evidence type="ECO:0000269" key="1">
    <source>
    </source>
</evidence>
<evidence type="ECO:0000269" key="2">
    <source>
    </source>
</evidence>
<evidence type="ECO:0000269" key="3">
    <source>
    </source>
</evidence>
<evidence type="ECO:0000269" key="4">
    <source>
    </source>
</evidence>
<evidence type="ECO:0000305" key="5"/>
<evidence type="ECO:0000312" key="6">
    <source>
        <dbReference type="HGNC" id="HGNC:8964"/>
    </source>
</evidence>
<dbReference type="EMBL" id="L19783">
    <property type="protein sequence ID" value="AAA03545.1"/>
    <property type="molecule type" value="mRNA"/>
</dbReference>
<dbReference type="EMBL" id="BT006804">
    <property type="protein sequence ID" value="AAP35450.1"/>
    <property type="molecule type" value="mRNA"/>
</dbReference>
<dbReference type="EMBL" id="AK314108">
    <property type="protein sequence ID" value="BAG36801.1"/>
    <property type="molecule type" value="mRNA"/>
</dbReference>
<dbReference type="EMBL" id="CH471061">
    <property type="protein sequence ID" value="EAW80942.1"/>
    <property type="molecule type" value="Genomic_DNA"/>
</dbReference>
<dbReference type="EMBL" id="BC004100">
    <property type="protein sequence ID" value="AAH04100.1"/>
    <property type="molecule type" value="mRNA"/>
</dbReference>
<dbReference type="EMBL" id="BC071849">
    <property type="protein sequence ID" value="AAH71849.1"/>
    <property type="molecule type" value="mRNA"/>
</dbReference>
<dbReference type="CCDS" id="CCDS9784.1"/>
<dbReference type="PIR" id="A48024">
    <property type="entry name" value="A48024"/>
</dbReference>
<dbReference type="RefSeq" id="NP_004560.1">
    <property type="nucleotide sequence ID" value="NM_004569.5"/>
</dbReference>
<dbReference type="BioGRID" id="111301">
    <property type="interactions" value="181"/>
</dbReference>
<dbReference type="ComplexPortal" id="CPX-6502">
    <property type="entry name" value="Glycosylphosphatidylinositol-N-acetylglucosaminyltransferase complex"/>
</dbReference>
<dbReference type="CORUM" id="Q14442"/>
<dbReference type="FunCoup" id="Q14442">
    <property type="interactions" value="921"/>
</dbReference>
<dbReference type="IntAct" id="Q14442">
    <property type="interactions" value="159"/>
</dbReference>
<dbReference type="MINT" id="Q14442"/>
<dbReference type="STRING" id="9606.ENSP00000216452"/>
<dbReference type="iPTMnet" id="Q14442"/>
<dbReference type="PhosphoSitePlus" id="Q14442"/>
<dbReference type="BioMuta" id="PIGH"/>
<dbReference type="DMDM" id="27151659"/>
<dbReference type="jPOST" id="Q14442"/>
<dbReference type="MassIVE" id="Q14442"/>
<dbReference type="PaxDb" id="9606-ENSP00000216452"/>
<dbReference type="PeptideAtlas" id="Q14442"/>
<dbReference type="ProteomicsDB" id="59991"/>
<dbReference type="Pumba" id="Q14442"/>
<dbReference type="Antibodypedia" id="24854">
    <property type="antibodies" value="147 antibodies from 23 providers"/>
</dbReference>
<dbReference type="DNASU" id="5283"/>
<dbReference type="Ensembl" id="ENST00000216452.9">
    <property type="protein sequence ID" value="ENSP00000216452.4"/>
    <property type="gene ID" value="ENSG00000100564.9"/>
</dbReference>
<dbReference type="GeneID" id="5283"/>
<dbReference type="KEGG" id="hsa:5283"/>
<dbReference type="MANE-Select" id="ENST00000216452.9">
    <property type="protein sequence ID" value="ENSP00000216452.4"/>
    <property type="RefSeq nucleotide sequence ID" value="NM_004569.5"/>
    <property type="RefSeq protein sequence ID" value="NP_004560.1"/>
</dbReference>
<dbReference type="UCSC" id="uc001xjr.2">
    <property type="organism name" value="human"/>
</dbReference>
<dbReference type="AGR" id="HGNC:8964"/>
<dbReference type="CTD" id="5283"/>
<dbReference type="DisGeNET" id="5283"/>
<dbReference type="GeneCards" id="PIGH"/>
<dbReference type="HGNC" id="HGNC:8964">
    <property type="gene designation" value="PIGH"/>
</dbReference>
<dbReference type="HPA" id="ENSG00000100564">
    <property type="expression patterns" value="Low tissue specificity"/>
</dbReference>
<dbReference type="MalaCards" id="PIGH"/>
<dbReference type="MIM" id="600154">
    <property type="type" value="gene"/>
</dbReference>
<dbReference type="MIM" id="618010">
    <property type="type" value="phenotype"/>
</dbReference>
<dbReference type="neXtProt" id="NX_Q14442"/>
<dbReference type="OpenTargets" id="ENSG00000100564"/>
<dbReference type="PharmGKB" id="PA33295"/>
<dbReference type="VEuPathDB" id="HostDB:ENSG00000100564"/>
<dbReference type="eggNOG" id="KOG4551">
    <property type="taxonomic scope" value="Eukaryota"/>
</dbReference>
<dbReference type="GeneTree" id="ENSGT00390000011890"/>
<dbReference type="InParanoid" id="Q14442"/>
<dbReference type="OMA" id="RETTTFI"/>
<dbReference type="OrthoDB" id="6256716at2759"/>
<dbReference type="PAN-GO" id="Q14442">
    <property type="GO annotations" value="2 GO annotations based on evolutionary models"/>
</dbReference>
<dbReference type="PhylomeDB" id="Q14442"/>
<dbReference type="TreeFam" id="TF324479"/>
<dbReference type="PathwayCommons" id="Q14442"/>
<dbReference type="Reactome" id="R-HSA-162710">
    <property type="pathway name" value="Synthesis of glycosylphosphatidylinositol (GPI)"/>
</dbReference>
<dbReference type="SignaLink" id="Q14442"/>
<dbReference type="UniPathway" id="UPA00196"/>
<dbReference type="BioGRID-ORCS" id="5283">
    <property type="hits" value="99 hits in 1150 CRISPR screens"/>
</dbReference>
<dbReference type="ChiTaRS" id="PIGH">
    <property type="organism name" value="human"/>
</dbReference>
<dbReference type="GeneWiki" id="PIGH"/>
<dbReference type="GenomeRNAi" id="5283"/>
<dbReference type="Pharos" id="Q14442">
    <property type="development level" value="Tbio"/>
</dbReference>
<dbReference type="PRO" id="PR:Q14442"/>
<dbReference type="Proteomes" id="UP000005640">
    <property type="component" value="Chromosome 14"/>
</dbReference>
<dbReference type="RNAct" id="Q14442">
    <property type="molecule type" value="protein"/>
</dbReference>
<dbReference type="Bgee" id="ENSG00000100564">
    <property type="expression patterns" value="Expressed in body of pancreas and 194 other cell types or tissues"/>
</dbReference>
<dbReference type="ExpressionAtlas" id="Q14442">
    <property type="expression patterns" value="baseline and differential"/>
</dbReference>
<dbReference type="GO" id="GO:0005783">
    <property type="term" value="C:endoplasmic reticulum"/>
    <property type="evidence" value="ECO:0000304"/>
    <property type="project" value="ProtInc"/>
</dbReference>
<dbReference type="GO" id="GO:0005789">
    <property type="term" value="C:endoplasmic reticulum membrane"/>
    <property type="evidence" value="ECO:0000314"/>
    <property type="project" value="ComplexPortal"/>
</dbReference>
<dbReference type="GO" id="GO:0000506">
    <property type="term" value="C:glycosylphosphatidylinositol-N-acetylglucosaminyltransferase (GPI-GnT) complex"/>
    <property type="evidence" value="ECO:0000314"/>
    <property type="project" value="UniProtKB"/>
</dbReference>
<dbReference type="GO" id="GO:0003824">
    <property type="term" value="F:catalytic activity"/>
    <property type="evidence" value="ECO:0000304"/>
    <property type="project" value="ProtInc"/>
</dbReference>
<dbReference type="GO" id="GO:0006506">
    <property type="term" value="P:GPI anchor biosynthetic process"/>
    <property type="evidence" value="ECO:0000314"/>
    <property type="project" value="UniProtKB"/>
</dbReference>
<dbReference type="GO" id="GO:0036211">
    <property type="term" value="P:protein modification process"/>
    <property type="evidence" value="ECO:0000304"/>
    <property type="project" value="ProtInc"/>
</dbReference>
<dbReference type="InterPro" id="IPR019328">
    <property type="entry name" value="GPI-GlcNAc_Trfase_PIG-H_dom"/>
</dbReference>
<dbReference type="InterPro" id="IPR044215">
    <property type="entry name" value="PIG-H"/>
</dbReference>
<dbReference type="PANTHER" id="PTHR15231">
    <property type="entry name" value="PHOSPHATIDYLINOSITOL N-ACETYLGLUCOSAMINYLTRANSFERASE SUBUNIT H"/>
    <property type="match status" value="1"/>
</dbReference>
<dbReference type="PANTHER" id="PTHR15231:SF1">
    <property type="entry name" value="PHOSPHATIDYLINOSITOL N-ACETYLGLUCOSAMINYLTRANSFERASE SUBUNIT H"/>
    <property type="match status" value="1"/>
</dbReference>
<dbReference type="Pfam" id="PF10181">
    <property type="entry name" value="PIG-H"/>
    <property type="match status" value="1"/>
</dbReference>
<accession>Q14442</accession>
<accession>B2RAA4</accession>
<reference key="1">
    <citation type="journal article" date="1993" name="J. Biol. Chem.">
        <title>Correction of the class H defect in glycosylphosphatidylinositol anchor biosynthesis in Ltk- cells by a human cDNA clone.</title>
        <authorList>
            <person name="Kamitani T."/>
            <person name="Chang H.M."/>
            <person name="Rollins C."/>
            <person name="Waneck G.L."/>
            <person name="Yeh E.T."/>
        </authorList>
    </citation>
    <scope>NUCLEOTIDE SEQUENCE [MRNA]</scope>
    <source>
        <tissue>Placenta</tissue>
    </source>
</reference>
<reference key="2">
    <citation type="submission" date="2003-05" db="EMBL/GenBank/DDBJ databases">
        <title>Cloning of human full-length CDSs in BD Creator(TM) system donor vector.</title>
        <authorList>
            <person name="Kalnine N."/>
            <person name="Chen X."/>
            <person name="Rolfs A."/>
            <person name="Halleck A."/>
            <person name="Hines L."/>
            <person name="Eisenstein S."/>
            <person name="Koundinya M."/>
            <person name="Raphael J."/>
            <person name="Moreira D."/>
            <person name="Kelley T."/>
            <person name="LaBaer J."/>
            <person name="Lin Y."/>
            <person name="Phelan M."/>
            <person name="Farmer A."/>
        </authorList>
    </citation>
    <scope>NUCLEOTIDE SEQUENCE [LARGE SCALE MRNA]</scope>
</reference>
<reference key="3">
    <citation type="journal article" date="2004" name="Nat. Genet.">
        <title>Complete sequencing and characterization of 21,243 full-length human cDNAs.</title>
        <authorList>
            <person name="Ota T."/>
            <person name="Suzuki Y."/>
            <person name="Nishikawa T."/>
            <person name="Otsuki T."/>
            <person name="Sugiyama T."/>
            <person name="Irie R."/>
            <person name="Wakamatsu A."/>
            <person name="Hayashi K."/>
            <person name="Sato H."/>
            <person name="Nagai K."/>
            <person name="Kimura K."/>
            <person name="Makita H."/>
            <person name="Sekine M."/>
            <person name="Obayashi M."/>
            <person name="Nishi T."/>
            <person name="Shibahara T."/>
            <person name="Tanaka T."/>
            <person name="Ishii S."/>
            <person name="Yamamoto J."/>
            <person name="Saito K."/>
            <person name="Kawai Y."/>
            <person name="Isono Y."/>
            <person name="Nakamura Y."/>
            <person name="Nagahari K."/>
            <person name="Murakami K."/>
            <person name="Yasuda T."/>
            <person name="Iwayanagi T."/>
            <person name="Wagatsuma M."/>
            <person name="Shiratori A."/>
            <person name="Sudo H."/>
            <person name="Hosoiri T."/>
            <person name="Kaku Y."/>
            <person name="Kodaira H."/>
            <person name="Kondo H."/>
            <person name="Sugawara M."/>
            <person name="Takahashi M."/>
            <person name="Kanda K."/>
            <person name="Yokoi T."/>
            <person name="Furuya T."/>
            <person name="Kikkawa E."/>
            <person name="Omura Y."/>
            <person name="Abe K."/>
            <person name="Kamihara K."/>
            <person name="Katsuta N."/>
            <person name="Sato K."/>
            <person name="Tanikawa M."/>
            <person name="Yamazaki M."/>
            <person name="Ninomiya K."/>
            <person name="Ishibashi T."/>
            <person name="Yamashita H."/>
            <person name="Murakawa K."/>
            <person name="Fujimori K."/>
            <person name="Tanai H."/>
            <person name="Kimata M."/>
            <person name="Watanabe M."/>
            <person name="Hiraoka S."/>
            <person name="Chiba Y."/>
            <person name="Ishida S."/>
            <person name="Ono Y."/>
            <person name="Takiguchi S."/>
            <person name="Watanabe S."/>
            <person name="Yosida M."/>
            <person name="Hotuta T."/>
            <person name="Kusano J."/>
            <person name="Kanehori K."/>
            <person name="Takahashi-Fujii A."/>
            <person name="Hara H."/>
            <person name="Tanase T.-O."/>
            <person name="Nomura Y."/>
            <person name="Togiya S."/>
            <person name="Komai F."/>
            <person name="Hara R."/>
            <person name="Takeuchi K."/>
            <person name="Arita M."/>
            <person name="Imose N."/>
            <person name="Musashino K."/>
            <person name="Yuuki H."/>
            <person name="Oshima A."/>
            <person name="Sasaki N."/>
            <person name="Aotsuka S."/>
            <person name="Yoshikawa Y."/>
            <person name="Matsunawa H."/>
            <person name="Ichihara T."/>
            <person name="Shiohata N."/>
            <person name="Sano S."/>
            <person name="Moriya S."/>
            <person name="Momiyama H."/>
            <person name="Satoh N."/>
            <person name="Takami S."/>
            <person name="Terashima Y."/>
            <person name="Suzuki O."/>
            <person name="Nakagawa S."/>
            <person name="Senoh A."/>
            <person name="Mizoguchi H."/>
            <person name="Goto Y."/>
            <person name="Shimizu F."/>
            <person name="Wakebe H."/>
            <person name="Hishigaki H."/>
            <person name="Watanabe T."/>
            <person name="Sugiyama A."/>
            <person name="Takemoto M."/>
            <person name="Kawakami B."/>
            <person name="Yamazaki M."/>
            <person name="Watanabe K."/>
            <person name="Kumagai A."/>
            <person name="Itakura S."/>
            <person name="Fukuzumi Y."/>
            <person name="Fujimori Y."/>
            <person name="Komiyama M."/>
            <person name="Tashiro H."/>
            <person name="Tanigami A."/>
            <person name="Fujiwara T."/>
            <person name="Ono T."/>
            <person name="Yamada K."/>
            <person name="Fujii Y."/>
            <person name="Ozaki K."/>
            <person name="Hirao M."/>
            <person name="Ohmori Y."/>
            <person name="Kawabata A."/>
            <person name="Hikiji T."/>
            <person name="Kobatake N."/>
            <person name="Inagaki H."/>
            <person name="Ikema Y."/>
            <person name="Okamoto S."/>
            <person name="Okitani R."/>
            <person name="Kawakami T."/>
            <person name="Noguchi S."/>
            <person name="Itoh T."/>
            <person name="Shigeta K."/>
            <person name="Senba T."/>
            <person name="Matsumura K."/>
            <person name="Nakajima Y."/>
            <person name="Mizuno T."/>
            <person name="Morinaga M."/>
            <person name="Sasaki M."/>
            <person name="Togashi T."/>
            <person name="Oyama M."/>
            <person name="Hata H."/>
            <person name="Watanabe M."/>
            <person name="Komatsu T."/>
            <person name="Mizushima-Sugano J."/>
            <person name="Satoh T."/>
            <person name="Shirai Y."/>
            <person name="Takahashi Y."/>
            <person name="Nakagawa K."/>
            <person name="Okumura K."/>
            <person name="Nagase T."/>
            <person name="Nomura N."/>
            <person name="Kikuchi H."/>
            <person name="Masuho Y."/>
            <person name="Yamashita R."/>
            <person name="Nakai K."/>
            <person name="Yada T."/>
            <person name="Nakamura Y."/>
            <person name="Ohara O."/>
            <person name="Isogai T."/>
            <person name="Sugano S."/>
        </authorList>
    </citation>
    <scope>NUCLEOTIDE SEQUENCE [LARGE SCALE MRNA]</scope>
    <source>
        <tissue>Brain cortex</tissue>
    </source>
</reference>
<reference key="4">
    <citation type="submission" date="2005-07" db="EMBL/GenBank/DDBJ databases">
        <authorList>
            <person name="Mural R.J."/>
            <person name="Istrail S."/>
            <person name="Sutton G.G."/>
            <person name="Florea L."/>
            <person name="Halpern A.L."/>
            <person name="Mobarry C.M."/>
            <person name="Lippert R."/>
            <person name="Walenz B."/>
            <person name="Shatkay H."/>
            <person name="Dew I."/>
            <person name="Miller J.R."/>
            <person name="Flanigan M.J."/>
            <person name="Edwards N.J."/>
            <person name="Bolanos R."/>
            <person name="Fasulo D."/>
            <person name="Halldorsson B.V."/>
            <person name="Hannenhalli S."/>
            <person name="Turner R."/>
            <person name="Yooseph S."/>
            <person name="Lu F."/>
            <person name="Nusskern D.R."/>
            <person name="Shue B.C."/>
            <person name="Zheng X.H."/>
            <person name="Zhong F."/>
            <person name="Delcher A.L."/>
            <person name="Huson D.H."/>
            <person name="Kravitz S.A."/>
            <person name="Mouchard L."/>
            <person name="Reinert K."/>
            <person name="Remington K.A."/>
            <person name="Clark A.G."/>
            <person name="Waterman M.S."/>
            <person name="Eichler E.E."/>
            <person name="Adams M.D."/>
            <person name="Hunkapiller M.W."/>
            <person name="Myers E.W."/>
            <person name="Venter J.C."/>
        </authorList>
    </citation>
    <scope>NUCLEOTIDE SEQUENCE [LARGE SCALE GENOMIC DNA]</scope>
</reference>
<reference key="5">
    <citation type="journal article" date="2004" name="Genome Res.">
        <title>The status, quality, and expansion of the NIH full-length cDNA project: the Mammalian Gene Collection (MGC).</title>
        <authorList>
            <consortium name="The MGC Project Team"/>
        </authorList>
    </citation>
    <scope>NUCLEOTIDE SEQUENCE [LARGE SCALE MRNA]</scope>
    <source>
        <tissue>Blood</tissue>
        <tissue>Lung</tissue>
    </source>
</reference>
<reference key="6">
    <citation type="journal article" date="1998" name="EMBO J.">
        <title>The first step of glycosylphosphatidylinositol biosynthesis is mediated by a complex of PIG-A, PIG-H, PIG-C and GPI1.</title>
        <authorList>
            <person name="Watanabe R."/>
            <person name="Inoue N."/>
            <person name="Westfall B."/>
            <person name="Taron C.H."/>
            <person name="Orlean P."/>
            <person name="Takeda J."/>
            <person name="Kinoshita T."/>
        </authorList>
    </citation>
    <scope>COMPONENT OF GPI-GNT COMPLEX</scope>
    <scope>INTERACTION WITH PIGQ</scope>
    <scope>FUNCTION</scope>
</reference>
<reference key="7">
    <citation type="journal article" date="2005" name="Mol. Biol. Cell">
        <title>The initial enzyme for glycosylphosphatidylinositol biosynthesis requires PIG-Y, a seventh component.</title>
        <authorList>
            <person name="Murakami Y."/>
            <person name="Siripanyaphinyo U."/>
            <person name="Hong Y."/>
            <person name="Tashima Y."/>
            <person name="Maeda Y."/>
            <person name="Kinoshita T."/>
        </authorList>
    </citation>
    <scope>COMPONENT OF GPI-GNT COMPLEX</scope>
    <scope>FUNCTION</scope>
</reference>
<reference key="8">
    <citation type="journal article" date="2008" name="Mol. Cell">
        <title>Kinase-selective enrichment enables quantitative phosphoproteomics of the kinome across the cell cycle.</title>
        <authorList>
            <person name="Daub H."/>
            <person name="Olsen J.V."/>
            <person name="Bairlein M."/>
            <person name="Gnad F."/>
            <person name="Oppermann F.S."/>
            <person name="Korner R."/>
            <person name="Greff Z."/>
            <person name="Keri G."/>
            <person name="Stemmann O."/>
            <person name="Mann M."/>
        </authorList>
    </citation>
    <scope>IDENTIFICATION BY MASS SPECTROMETRY [LARGE SCALE ANALYSIS]</scope>
    <source>
        <tissue>Cervix carcinoma</tissue>
    </source>
</reference>
<reference key="9">
    <citation type="journal article" date="2018" name="Hum. Mutat.">
        <title>A homozygous variant disrupting the PIGH start-codon is associated with developmental delay, epilepsy, and microcephaly.</title>
        <authorList>
            <person name="Pagnamenta A.T."/>
            <person name="Murakami Y."/>
            <person name="Anzilotti C."/>
            <person name="Titheradge H."/>
            <person name="Oates A.J."/>
            <person name="Morton J."/>
            <person name="Kinoshita T."/>
            <person name="Kini U."/>
            <person name="Taylor J.C."/>
        </authorList>
    </citation>
    <scope>INVOLVEMENT IN GPIBD17</scope>
</reference>
<reference key="10">
    <citation type="journal article" date="2018" name="Hum. Mutat.">
        <title>A PIGH mutation leading to GPI deficiency is associated with developmental delay and autism.</title>
        <authorList>
            <person name="Nguyen T.T.M."/>
            <person name="Mahida S."/>
            <person name="Smith-Hicks C."/>
            <person name="Campeau P.M."/>
        </authorList>
    </citation>
    <scope>INVOLVEMENT IN GPIBD17</scope>
    <scope>VARIANT GPIBD17 PRO-103</scope>
    <scope>CHARACTERIZATION OF VARIANT GPIBD17 PRO-103</scope>
</reference>
<name>PIGH_HUMAN</name>
<sequence length="188" mass="21081">MEDERSFSDICGGRLALQRRYYSPSCREFCLSCPRLSLRSLTAVTCTVWLAAYGLFTLCENSMILSAAIFITLLGLLGYLHFVKIDQETLLIIDSLGIQMTSSYASGKESTTFIEMGKVKDIVINEAIYMQKVIYYLCILLKDPVEPHGISQVVPVFQSAKPRLDCLIEVYRSCQEILAHQKATSTSP</sequence>
<comment type="function">
    <text evidence="1 4">Part of the glycosylphosphatidylinositol-N-acetylglucosaminyltransferase (GPI-GnT) complex that catalyzes the transfer of N-acetylglucosamine from UDP-N-acetylglucosamine to phosphatidylinositol and participates in the first step of GPI biosynthesis.</text>
</comment>
<comment type="pathway">
    <text evidence="1 4">Glycolipid biosynthesis; glycosylphosphatidylinositol-anchor biosynthesis.</text>
</comment>
<comment type="subunit">
    <text evidence="1 4">Component of the glycosylphosphatidylinositol-N-acetylglucosaminyltransferase (GPI-GnT) complex composed at least by PIGA, PIGC, PIGH, PIGP, PIGQ, PIGY and DPM2 (PubMed:16162815, PubMed:9463366). Interacts with PIGQ (PubMed:9463366).</text>
</comment>
<comment type="interaction">
    <interactant intactId="EBI-2803676">
        <id>Q14442</id>
    </interactant>
    <interactant intactId="EBI-26643054">
        <id>P37287</id>
        <label>PIGA</label>
    </interactant>
    <organismsDiffer>false</organismsDiffer>
    <experiments>6</experiments>
</comment>
<comment type="interaction">
    <interactant intactId="EBI-2803676">
        <id>Q14442</id>
    </interactant>
    <interactant intactId="EBI-2339260">
        <id>Q9BRB3</id>
        <label>PIGQ</label>
    </interactant>
    <organismsDiffer>false</organismsDiffer>
    <experiments>2</experiments>
</comment>
<comment type="subcellular location">
    <subcellularLocation>
        <location>Cytoplasm</location>
    </subcellularLocation>
</comment>
<comment type="disease" evidence="2 3">
    <disease id="DI-05271">
        <name>Glycosylphosphatidylinositol biosynthesis defect 17</name>
        <acronym>GPIBD17</acronym>
        <description>An autosomal recessive disorder characterized by variable neurologic deficits that become apparent in infancy or early childhood. Clinical features include learning disabilities, mild-to-moderate developmental delay, seizures of variable severity, aggressive or over-friendly behavior, and autistic features.</description>
        <dbReference type="MIM" id="618010"/>
    </disease>
    <text>The disease is caused by variants affecting the gene represented in this entry.</text>
</comment>
<comment type="similarity">
    <text evidence="5">Belongs to the PIGH family.</text>
</comment>
<comment type="online information" name="Functional Glycomics Gateway - GTase">
    <link uri="http://www.functionalglycomics.org/glycomics/molecule/jsp/glycoEnzyme/viewGlycoEnzyme.jsp?gbpId=gt_hum_557"/>
    <text>Phosphatidylinositol N-acetylglucosaminyltransferase subunit H</text>
</comment>